<dbReference type="EMBL" id="AY261363">
    <property type="status" value="NOT_ANNOTATED_CDS"/>
    <property type="molecule type" value="Genomic_DNA"/>
</dbReference>
<dbReference type="SMR" id="P0C8F7"/>
<dbReference type="Proteomes" id="UP000000859">
    <property type="component" value="Segment"/>
</dbReference>
<dbReference type="GO" id="GO:0003676">
    <property type="term" value="F:nucleic acid binding"/>
    <property type="evidence" value="ECO:0007669"/>
    <property type="project" value="InterPro"/>
</dbReference>
<dbReference type="GO" id="GO:0008270">
    <property type="term" value="F:zinc ion binding"/>
    <property type="evidence" value="ECO:0007669"/>
    <property type="project" value="UniProtKB-KW"/>
</dbReference>
<dbReference type="GO" id="GO:0006351">
    <property type="term" value="P:DNA-templated transcription"/>
    <property type="evidence" value="ECO:0007669"/>
    <property type="project" value="InterPro"/>
</dbReference>
<dbReference type="Gene3D" id="2.20.25.10">
    <property type="match status" value="1"/>
</dbReference>
<dbReference type="InterPro" id="IPR035100">
    <property type="entry name" value="TF_IIS-typ"/>
</dbReference>
<dbReference type="InterPro" id="IPR003618">
    <property type="entry name" value="TFIIS_cen_dom"/>
</dbReference>
<dbReference type="InterPro" id="IPR001222">
    <property type="entry name" value="Znf_TFIIS"/>
</dbReference>
<dbReference type="Pfam" id="PF01096">
    <property type="entry name" value="Zn_ribbon_TFIIS"/>
    <property type="match status" value="1"/>
</dbReference>
<dbReference type="PIRSF" id="PIRSF006704">
    <property type="entry name" value="TF_IIS"/>
    <property type="match status" value="1"/>
</dbReference>
<dbReference type="SMART" id="SM00510">
    <property type="entry name" value="TFS2M"/>
    <property type="match status" value="1"/>
</dbReference>
<dbReference type="SMART" id="SM00440">
    <property type="entry name" value="ZnF_C2C2"/>
    <property type="match status" value="1"/>
</dbReference>
<dbReference type="SUPFAM" id="SSF57783">
    <property type="entry name" value="Zinc beta-ribbon"/>
    <property type="match status" value="1"/>
</dbReference>
<dbReference type="PROSITE" id="PS51321">
    <property type="entry name" value="TFIIS_CENTRAL"/>
    <property type="match status" value="1"/>
</dbReference>
<dbReference type="PROSITE" id="PS00466">
    <property type="entry name" value="ZF_TFIIS_1"/>
    <property type="match status" value="1"/>
</dbReference>
<dbReference type="PROSITE" id="PS51133">
    <property type="entry name" value="ZF_TFIIS_2"/>
    <property type="match status" value="1"/>
</dbReference>
<reference key="1">
    <citation type="submission" date="2003-03" db="EMBL/GenBank/DDBJ databases">
        <title>African swine fever virus genomes.</title>
        <authorList>
            <person name="Kutish G.F."/>
            <person name="Rock D.L."/>
        </authorList>
    </citation>
    <scope>NUCLEOTIDE SEQUENCE [LARGE SCALE GENOMIC DNA]</scope>
</reference>
<accession>P0C8F7</accession>
<name>TFIIS_ASFP4</name>
<organismHost>
    <name type="scientific">Ornithodoros</name>
    <name type="common">relapsing fever ticks</name>
    <dbReference type="NCBI Taxonomy" id="6937"/>
</organismHost>
<organismHost>
    <name type="scientific">Phacochoerus aethiopicus</name>
    <name type="common">Warthog</name>
    <dbReference type="NCBI Taxonomy" id="85517"/>
</organismHost>
<organismHost>
    <name type="scientific">Phacochoerus africanus</name>
    <name type="common">Warthog</name>
    <dbReference type="NCBI Taxonomy" id="41426"/>
</organismHost>
<organismHost>
    <name type="scientific">Potamochoerus larvatus</name>
    <name type="common">Bushpig</name>
    <dbReference type="NCBI Taxonomy" id="273792"/>
</organismHost>
<organismHost>
    <name type="scientific">Sus scrofa</name>
    <name type="common">Pig</name>
    <dbReference type="NCBI Taxonomy" id="9823"/>
</organismHost>
<comment type="function">
    <text evidence="1">Putative initiation factor. Necessary for efficient transcription elongation past template-encoded arresting sites.</text>
</comment>
<comment type="similarity">
    <text evidence="5">Belongs to the TFS-II family.</text>
</comment>
<proteinExistence type="inferred from homology"/>
<evidence type="ECO:0000250" key="1">
    <source>
        <dbReference type="UniProtKB" id="P07273"/>
    </source>
</evidence>
<evidence type="ECO:0000250" key="2">
    <source>
        <dbReference type="UniProtKB" id="P27948"/>
    </source>
</evidence>
<evidence type="ECO:0000255" key="3">
    <source>
        <dbReference type="PROSITE-ProRule" id="PRU00472"/>
    </source>
</evidence>
<evidence type="ECO:0000255" key="4">
    <source>
        <dbReference type="PROSITE-ProRule" id="PRU00651"/>
    </source>
</evidence>
<evidence type="ECO:0000305" key="5"/>
<feature type="chain" id="PRO_0000355062" description="Transcription factor TFIIS homolog">
    <location>
        <begin position="1"/>
        <end position="243"/>
    </location>
</feature>
<feature type="domain" description="TFIIS central" evidence="4">
    <location>
        <begin position="77"/>
        <end position="201"/>
    </location>
</feature>
<feature type="zinc finger region" description="TFIIS-type" evidence="3">
    <location>
        <begin position="202"/>
        <end position="242"/>
    </location>
</feature>
<feature type="binding site" evidence="3">
    <location>
        <position position="206"/>
    </location>
    <ligand>
        <name>Zn(2+)</name>
        <dbReference type="ChEBI" id="CHEBI:29105"/>
    </ligand>
</feature>
<feature type="binding site" evidence="3">
    <location>
        <position position="209"/>
    </location>
    <ligand>
        <name>Zn(2+)</name>
        <dbReference type="ChEBI" id="CHEBI:29105"/>
    </ligand>
</feature>
<feature type="binding site" evidence="3">
    <location>
        <position position="234"/>
    </location>
    <ligand>
        <name>Zn(2+)</name>
        <dbReference type="ChEBI" id="CHEBI:29105"/>
    </ligand>
</feature>
<feature type="binding site" evidence="3">
    <location>
        <position position="237"/>
    </location>
    <ligand>
        <name>Zn(2+)</name>
        <dbReference type="ChEBI" id="CHEBI:29105"/>
    </ligand>
</feature>
<organism>
    <name type="scientific">African swine fever virus (isolate Tick/South Africa/Pretoriuskop Pr4/1996)</name>
    <name type="common">ASFV</name>
    <dbReference type="NCBI Taxonomy" id="561443"/>
    <lineage>
        <taxon>Viruses</taxon>
        <taxon>Varidnaviria</taxon>
        <taxon>Bamfordvirae</taxon>
        <taxon>Nucleocytoviricota</taxon>
        <taxon>Pokkesviricetes</taxon>
        <taxon>Asfuvirales</taxon>
        <taxon>Asfarviridae</taxon>
        <taxon>Asfivirus</taxon>
        <taxon>African swine fever virus</taxon>
    </lineage>
</organism>
<keyword id="KW-0426">Late protein</keyword>
<keyword id="KW-0479">Metal-binding</keyword>
<keyword id="KW-0804">Transcription</keyword>
<keyword id="KW-0805">Transcription regulation</keyword>
<keyword id="KW-0862">Zinc</keyword>
<keyword id="KW-0863">Zinc-finger</keyword>
<sequence length="243" mass="28558">MKMHIARDSIVFLLNKHLQNTILTNKIEQECFLQADTPKKYLQYIKPFLINCMTKNITTDLVMKDSKRLEPYIILEMRDIIQMMFFRTLQKHMFFKEHTDLCTEYAQKIEASCYHYTYQQQEKTFLEEYSTRCGTINHIINCEKKSHQQQDNDALNKLISGELKPEAIGSMTFAELCPSAALKEKTEITLRSQQKVAEKTSQLYKCPNCKQRMCTYREVQTRALDEPSTIFCTCKKCGHEFIG</sequence>
<gene>
    <name type="ordered locus">Pret-152</name>
</gene>
<protein>
    <recommendedName>
        <fullName evidence="2">Transcription factor TFIIS homolog</fullName>
    </recommendedName>
</protein>